<organism>
    <name type="scientific">Pongo abelii</name>
    <name type="common">Sumatran orangutan</name>
    <name type="synonym">Pongo pygmaeus abelii</name>
    <dbReference type="NCBI Taxonomy" id="9601"/>
    <lineage>
        <taxon>Eukaryota</taxon>
        <taxon>Metazoa</taxon>
        <taxon>Chordata</taxon>
        <taxon>Craniata</taxon>
        <taxon>Vertebrata</taxon>
        <taxon>Euteleostomi</taxon>
        <taxon>Mammalia</taxon>
        <taxon>Eutheria</taxon>
        <taxon>Euarchontoglires</taxon>
        <taxon>Primates</taxon>
        <taxon>Haplorrhini</taxon>
        <taxon>Catarrhini</taxon>
        <taxon>Hominidae</taxon>
        <taxon>Pongo</taxon>
    </lineage>
</organism>
<name>ARFRP_PONAB</name>
<protein>
    <recommendedName>
        <fullName>ADP-ribosylation factor-related protein 1</fullName>
        <shortName>ARF-related protein 1</shortName>
    </recommendedName>
</protein>
<proteinExistence type="evidence at transcript level"/>
<keyword id="KW-0007">Acetylation</keyword>
<keyword id="KW-0333">Golgi apparatus</keyword>
<keyword id="KW-0342">GTP-binding</keyword>
<keyword id="KW-0547">Nucleotide-binding</keyword>
<keyword id="KW-1185">Reference proteome</keyword>
<feature type="chain" id="PRO_0000207489" description="ADP-ribosylation factor-related protein 1">
    <location>
        <begin position="1"/>
        <end position="201"/>
    </location>
</feature>
<feature type="binding site" evidence="1">
    <location>
        <begin position="24"/>
        <end position="31"/>
    </location>
    <ligand>
        <name>GTP</name>
        <dbReference type="ChEBI" id="CHEBI:37565"/>
    </ligand>
</feature>
<feature type="binding site" evidence="1">
    <location>
        <begin position="75"/>
        <end position="79"/>
    </location>
    <ligand>
        <name>GTP</name>
        <dbReference type="ChEBI" id="CHEBI:37565"/>
    </ligand>
</feature>
<feature type="binding site" evidence="1">
    <location>
        <begin position="134"/>
        <end position="137"/>
    </location>
    <ligand>
        <name>GTP</name>
        <dbReference type="ChEBI" id="CHEBI:37565"/>
    </ligand>
</feature>
<feature type="modified residue" description="N-acetylmethionine" evidence="2">
    <location>
        <position position="1"/>
    </location>
</feature>
<reference key="1">
    <citation type="submission" date="2004-11" db="EMBL/GenBank/DDBJ databases">
        <authorList>
            <consortium name="The German cDNA consortium"/>
        </authorList>
    </citation>
    <scope>NUCLEOTIDE SEQUENCE [LARGE SCALE MRNA]</scope>
    <source>
        <tissue>Brain cortex</tissue>
    </source>
</reference>
<sequence>MYTLLSGLYKYMFQKDEYCILILGLDNAGKTTFLEQSKTRFNKNYKGMSLSKITTTVGLNIGTVDVGKARLMFWDLGGQEELQSLWDKYYAECHGVIYVIDSTDEERLAESKQAFEKVVTSEALCGVPVLVLANKQDVETCLSIPDIKTAFSDCTSKIGRRDCLTQACSALTGKGVREGIEWMVKCVVRNVHRPPRQRDIT</sequence>
<evidence type="ECO:0000250" key="1"/>
<evidence type="ECO:0000250" key="2">
    <source>
        <dbReference type="UniProtKB" id="Q13795"/>
    </source>
</evidence>
<evidence type="ECO:0000250" key="3">
    <source>
        <dbReference type="UniProtKB" id="Q8BXL7"/>
    </source>
</evidence>
<evidence type="ECO:0000305" key="4"/>
<accession>Q5R579</accession>
<dbReference type="EMBL" id="CR860985">
    <property type="protein sequence ID" value="CAH93087.1"/>
    <property type="molecule type" value="mRNA"/>
</dbReference>
<dbReference type="RefSeq" id="XP_003779452.1">
    <property type="nucleotide sequence ID" value="XM_003779404.5"/>
</dbReference>
<dbReference type="RefSeq" id="XP_009232100.1">
    <property type="nucleotide sequence ID" value="XM_009233825.4"/>
</dbReference>
<dbReference type="RefSeq" id="XP_009232101.1">
    <property type="nucleotide sequence ID" value="XM_009233826.4"/>
</dbReference>
<dbReference type="RefSeq" id="XP_009232102.1">
    <property type="nucleotide sequence ID" value="XM_009233827.4"/>
</dbReference>
<dbReference type="SMR" id="Q5R579"/>
<dbReference type="FunCoup" id="Q5R579">
    <property type="interactions" value="2353"/>
</dbReference>
<dbReference type="STRING" id="9601.ENSPPYP00000012564"/>
<dbReference type="Ensembl" id="ENSPPYT00000013060.2">
    <property type="protein sequence ID" value="ENSPPYP00000012564.1"/>
    <property type="gene ID" value="ENSPPYG00000011245.3"/>
</dbReference>
<dbReference type="GeneID" id="100444340"/>
<dbReference type="KEGG" id="pon:100444340"/>
<dbReference type="CTD" id="10139"/>
<dbReference type="eggNOG" id="KOG0076">
    <property type="taxonomic scope" value="Eukaryota"/>
</dbReference>
<dbReference type="GeneTree" id="ENSGT00940000156407"/>
<dbReference type="HOGENOM" id="CLU_040729_7_2_1"/>
<dbReference type="InParanoid" id="Q5R579"/>
<dbReference type="OMA" id="HGFYKYM"/>
<dbReference type="OrthoDB" id="414781at2759"/>
<dbReference type="TreeFam" id="TF105788"/>
<dbReference type="Proteomes" id="UP000001595">
    <property type="component" value="Chromosome 20"/>
</dbReference>
<dbReference type="GO" id="GO:0005829">
    <property type="term" value="C:cytosol"/>
    <property type="evidence" value="ECO:0007669"/>
    <property type="project" value="GOC"/>
</dbReference>
<dbReference type="GO" id="GO:0016020">
    <property type="term" value="C:membrane"/>
    <property type="evidence" value="ECO:0007669"/>
    <property type="project" value="Ensembl"/>
</dbReference>
<dbReference type="GO" id="GO:0005802">
    <property type="term" value="C:trans-Golgi network"/>
    <property type="evidence" value="ECO:0007669"/>
    <property type="project" value="Ensembl"/>
</dbReference>
<dbReference type="GO" id="GO:0005525">
    <property type="term" value="F:GTP binding"/>
    <property type="evidence" value="ECO:0007669"/>
    <property type="project" value="UniProtKB-KW"/>
</dbReference>
<dbReference type="GO" id="GO:0003924">
    <property type="term" value="F:GTPase activity"/>
    <property type="evidence" value="ECO:0007669"/>
    <property type="project" value="InterPro"/>
</dbReference>
<dbReference type="GO" id="GO:0007369">
    <property type="term" value="P:gastrulation"/>
    <property type="evidence" value="ECO:0007669"/>
    <property type="project" value="Ensembl"/>
</dbReference>
<dbReference type="GO" id="GO:0043001">
    <property type="term" value="P:Golgi to plasma membrane protein transport"/>
    <property type="evidence" value="ECO:0007669"/>
    <property type="project" value="Ensembl"/>
</dbReference>
<dbReference type="GO" id="GO:0006886">
    <property type="term" value="P:intracellular protein transport"/>
    <property type="evidence" value="ECO:0007669"/>
    <property type="project" value="TreeGrafter"/>
</dbReference>
<dbReference type="GO" id="GO:0034067">
    <property type="term" value="P:protein localization to Golgi apparatus"/>
    <property type="evidence" value="ECO:0007669"/>
    <property type="project" value="Ensembl"/>
</dbReference>
<dbReference type="GO" id="GO:0042147">
    <property type="term" value="P:retrograde transport, endosome to Golgi"/>
    <property type="evidence" value="ECO:0007669"/>
    <property type="project" value="Ensembl"/>
</dbReference>
<dbReference type="CDD" id="cd04160">
    <property type="entry name" value="Arfrp1"/>
    <property type="match status" value="1"/>
</dbReference>
<dbReference type="FunFam" id="3.40.50.300:FF:000509">
    <property type="entry name" value="ADP-ribosylation factor-related protein 1"/>
    <property type="match status" value="1"/>
</dbReference>
<dbReference type="Gene3D" id="3.40.50.300">
    <property type="entry name" value="P-loop containing nucleotide triphosphate hydrolases"/>
    <property type="match status" value="1"/>
</dbReference>
<dbReference type="InterPro" id="IPR027417">
    <property type="entry name" value="P-loop_NTPase"/>
</dbReference>
<dbReference type="InterPro" id="IPR005225">
    <property type="entry name" value="Small_GTP-bd"/>
</dbReference>
<dbReference type="InterPro" id="IPR024156">
    <property type="entry name" value="Small_GTPase_ARF"/>
</dbReference>
<dbReference type="InterPro" id="IPR006689">
    <property type="entry name" value="Small_GTPase_ARF/SAR"/>
</dbReference>
<dbReference type="NCBIfam" id="TIGR00231">
    <property type="entry name" value="small_GTP"/>
    <property type="match status" value="1"/>
</dbReference>
<dbReference type="PANTHER" id="PTHR45909">
    <property type="entry name" value="ADP-RIBOSYLATION FACTOR-RELATED PROTEIN 1"/>
    <property type="match status" value="1"/>
</dbReference>
<dbReference type="PANTHER" id="PTHR45909:SF1">
    <property type="entry name" value="ADP-RIBOSYLATION FACTOR-RELATED PROTEIN 1"/>
    <property type="match status" value="1"/>
</dbReference>
<dbReference type="Pfam" id="PF00025">
    <property type="entry name" value="Arf"/>
    <property type="match status" value="1"/>
</dbReference>
<dbReference type="PRINTS" id="PR00449">
    <property type="entry name" value="RASTRNSFRMNG"/>
</dbReference>
<dbReference type="SMART" id="SM00177">
    <property type="entry name" value="ARF"/>
    <property type="match status" value="1"/>
</dbReference>
<dbReference type="SMART" id="SM00175">
    <property type="entry name" value="RAB"/>
    <property type="match status" value="1"/>
</dbReference>
<dbReference type="SMART" id="SM00178">
    <property type="entry name" value="SAR"/>
    <property type="match status" value="1"/>
</dbReference>
<dbReference type="SUPFAM" id="SSF52540">
    <property type="entry name" value="P-loop containing nucleoside triphosphate hydrolases"/>
    <property type="match status" value="1"/>
</dbReference>
<dbReference type="PROSITE" id="PS51417">
    <property type="entry name" value="ARF"/>
    <property type="match status" value="1"/>
</dbReference>
<comment type="function">
    <text evidence="3">Trans-Golgi-associated GTPase that regulates protein sorting. Controls the targeting of ARL1 and its effector to the trans-Golgi. Required for the lipidation of chylomicrons in the intestine and required for VLDL lipidation in the liver.</text>
</comment>
<comment type="subunit">
    <text evidence="2">Interacts with SYS1.</text>
</comment>
<comment type="subcellular location">
    <subcellularLocation>
        <location>Golgi apparatus</location>
    </subcellularLocation>
    <subcellularLocation>
        <location evidence="3">Golgi apparatus</location>
        <location evidence="3">trans-Golgi network</location>
    </subcellularLocation>
    <text evidence="3">Located in the trans-Golgi in the GTP-bound active state.</text>
</comment>
<comment type="similarity">
    <text evidence="4">Belongs to the small GTPase superfamily. Arf family.</text>
</comment>
<gene>
    <name type="primary">ARFRP1</name>
</gene>